<protein>
    <recommendedName>
        <fullName evidence="1">ATP-dependent Clp protease proteolytic subunit 1</fullName>
        <ecNumber evidence="1">3.4.21.92</ecNumber>
    </recommendedName>
    <alternativeName>
        <fullName evidence="1">Endopeptidase Clp 1</fullName>
    </alternativeName>
</protein>
<reference key="1">
    <citation type="journal article" date="2007" name="ISME J.">
        <title>Population level functional diversity in a microbial community revealed by comparative genomic and metagenomic analyses.</title>
        <authorList>
            <person name="Bhaya D."/>
            <person name="Grossman A.R."/>
            <person name="Steunou A.-S."/>
            <person name="Khuri N."/>
            <person name="Cohan F.M."/>
            <person name="Hamamura N."/>
            <person name="Melendrez M.C."/>
            <person name="Bateson M.M."/>
            <person name="Ward D.M."/>
            <person name="Heidelberg J.F."/>
        </authorList>
    </citation>
    <scope>NUCLEOTIDE SEQUENCE [LARGE SCALE GENOMIC DNA]</scope>
    <source>
        <strain>JA-3-3Ab</strain>
    </source>
</reference>
<sequence>MPIGVPRVPYRLPGEPYSQWISLDDRLYQERILFIGEPIDDNLANTIVGVMLYLNSQDPQKDIVMYINSPGGSVTAGMAIYDTMNHVKPDIVTVCVGQAASMGAFLLAAGTKGKRFALPHSRIMLHQPSLGMIQGQASDIEIRARETLRVKRRMNELLAQMTGQPLEKIERDVERDFYLSATEAQAYGIVDRVIQERSEAMAG</sequence>
<name>CLPP1_SYNJA</name>
<comment type="function">
    <text evidence="1">Cleaves peptides in various proteins in a process that requires ATP hydrolysis. Has a chymotrypsin-like activity. Plays a major role in the degradation of misfolded proteins.</text>
</comment>
<comment type="catalytic activity">
    <reaction evidence="1">
        <text>Hydrolysis of proteins to small peptides in the presence of ATP and magnesium. alpha-casein is the usual test substrate. In the absence of ATP, only oligopeptides shorter than five residues are hydrolyzed (such as succinyl-Leu-Tyr-|-NHMec, and Leu-Tyr-Leu-|-Tyr-Trp, in which cleavage of the -Tyr-|-Leu- and -Tyr-|-Trp bonds also occurs).</text>
        <dbReference type="EC" id="3.4.21.92"/>
    </reaction>
</comment>
<comment type="subunit">
    <text evidence="1">Fourteen ClpP subunits assemble into 2 heptameric rings which stack back to back to give a disk-like structure with a central cavity, resembling the structure of eukaryotic proteasomes.</text>
</comment>
<comment type="subcellular location">
    <subcellularLocation>
        <location evidence="1">Cytoplasm</location>
    </subcellularLocation>
</comment>
<comment type="similarity">
    <text evidence="1">Belongs to the peptidase S14 family.</text>
</comment>
<dbReference type="EC" id="3.4.21.92" evidence="1"/>
<dbReference type="EMBL" id="CP000239">
    <property type="protein sequence ID" value="ABC98872.1"/>
    <property type="molecule type" value="Genomic_DNA"/>
</dbReference>
<dbReference type="RefSeq" id="WP_011429555.1">
    <property type="nucleotide sequence ID" value="NC_007775.1"/>
</dbReference>
<dbReference type="SMR" id="Q2JWJ1"/>
<dbReference type="STRING" id="321327.CYA_0659"/>
<dbReference type="MEROPS" id="S14.001"/>
<dbReference type="KEGG" id="cya:CYA_0659"/>
<dbReference type="eggNOG" id="COG0740">
    <property type="taxonomic scope" value="Bacteria"/>
</dbReference>
<dbReference type="HOGENOM" id="CLU_058707_3_2_3"/>
<dbReference type="OrthoDB" id="571524at2"/>
<dbReference type="Proteomes" id="UP000008818">
    <property type="component" value="Chromosome"/>
</dbReference>
<dbReference type="GO" id="GO:0005737">
    <property type="term" value="C:cytoplasm"/>
    <property type="evidence" value="ECO:0007669"/>
    <property type="project" value="UniProtKB-SubCell"/>
</dbReference>
<dbReference type="GO" id="GO:0009368">
    <property type="term" value="C:endopeptidase Clp complex"/>
    <property type="evidence" value="ECO:0007669"/>
    <property type="project" value="TreeGrafter"/>
</dbReference>
<dbReference type="GO" id="GO:0004176">
    <property type="term" value="F:ATP-dependent peptidase activity"/>
    <property type="evidence" value="ECO:0007669"/>
    <property type="project" value="InterPro"/>
</dbReference>
<dbReference type="GO" id="GO:0051117">
    <property type="term" value="F:ATPase binding"/>
    <property type="evidence" value="ECO:0007669"/>
    <property type="project" value="TreeGrafter"/>
</dbReference>
<dbReference type="GO" id="GO:0004252">
    <property type="term" value="F:serine-type endopeptidase activity"/>
    <property type="evidence" value="ECO:0007669"/>
    <property type="project" value="UniProtKB-UniRule"/>
</dbReference>
<dbReference type="GO" id="GO:0006515">
    <property type="term" value="P:protein quality control for misfolded or incompletely synthesized proteins"/>
    <property type="evidence" value="ECO:0007669"/>
    <property type="project" value="TreeGrafter"/>
</dbReference>
<dbReference type="CDD" id="cd07017">
    <property type="entry name" value="S14_ClpP_2"/>
    <property type="match status" value="1"/>
</dbReference>
<dbReference type="FunFam" id="3.90.226.10:FF:000001">
    <property type="entry name" value="ATP-dependent Clp protease proteolytic subunit"/>
    <property type="match status" value="1"/>
</dbReference>
<dbReference type="Gene3D" id="3.90.226.10">
    <property type="entry name" value="2-enoyl-CoA Hydratase, Chain A, domain 1"/>
    <property type="match status" value="1"/>
</dbReference>
<dbReference type="HAMAP" id="MF_00444">
    <property type="entry name" value="ClpP"/>
    <property type="match status" value="1"/>
</dbReference>
<dbReference type="InterPro" id="IPR001907">
    <property type="entry name" value="ClpP"/>
</dbReference>
<dbReference type="InterPro" id="IPR029045">
    <property type="entry name" value="ClpP/crotonase-like_dom_sf"/>
</dbReference>
<dbReference type="InterPro" id="IPR023562">
    <property type="entry name" value="ClpP/TepA"/>
</dbReference>
<dbReference type="InterPro" id="IPR033135">
    <property type="entry name" value="ClpP_His_AS"/>
</dbReference>
<dbReference type="InterPro" id="IPR018215">
    <property type="entry name" value="ClpP_Ser_AS"/>
</dbReference>
<dbReference type="NCBIfam" id="NF001368">
    <property type="entry name" value="PRK00277.1"/>
    <property type="match status" value="1"/>
</dbReference>
<dbReference type="NCBIfam" id="NF009205">
    <property type="entry name" value="PRK12553.1"/>
    <property type="match status" value="1"/>
</dbReference>
<dbReference type="PANTHER" id="PTHR10381">
    <property type="entry name" value="ATP-DEPENDENT CLP PROTEASE PROTEOLYTIC SUBUNIT"/>
    <property type="match status" value="1"/>
</dbReference>
<dbReference type="PANTHER" id="PTHR10381:SF11">
    <property type="entry name" value="ATP-DEPENDENT CLP PROTEASE PROTEOLYTIC SUBUNIT, MITOCHONDRIAL"/>
    <property type="match status" value="1"/>
</dbReference>
<dbReference type="Pfam" id="PF00574">
    <property type="entry name" value="CLP_protease"/>
    <property type="match status" value="1"/>
</dbReference>
<dbReference type="PRINTS" id="PR00127">
    <property type="entry name" value="CLPPROTEASEP"/>
</dbReference>
<dbReference type="SUPFAM" id="SSF52096">
    <property type="entry name" value="ClpP/crotonase"/>
    <property type="match status" value="1"/>
</dbReference>
<dbReference type="PROSITE" id="PS00382">
    <property type="entry name" value="CLP_PROTEASE_HIS"/>
    <property type="match status" value="1"/>
</dbReference>
<dbReference type="PROSITE" id="PS00381">
    <property type="entry name" value="CLP_PROTEASE_SER"/>
    <property type="match status" value="1"/>
</dbReference>
<keyword id="KW-0963">Cytoplasm</keyword>
<keyword id="KW-0378">Hydrolase</keyword>
<keyword id="KW-0645">Protease</keyword>
<keyword id="KW-0720">Serine protease</keyword>
<proteinExistence type="inferred from homology"/>
<gene>
    <name evidence="1" type="primary">clpP1</name>
    <name type="ordered locus">CYA_0659</name>
</gene>
<organism>
    <name type="scientific">Synechococcus sp. (strain JA-3-3Ab)</name>
    <name type="common">Cyanobacteria bacterium Yellowstone A-Prime</name>
    <dbReference type="NCBI Taxonomy" id="321327"/>
    <lineage>
        <taxon>Bacteria</taxon>
        <taxon>Bacillati</taxon>
        <taxon>Cyanobacteriota</taxon>
        <taxon>Cyanophyceae</taxon>
        <taxon>Synechococcales</taxon>
        <taxon>Synechococcaceae</taxon>
        <taxon>Synechococcus</taxon>
    </lineage>
</organism>
<accession>Q2JWJ1</accession>
<feature type="chain" id="PRO_0000236414" description="ATP-dependent Clp protease proteolytic subunit 1">
    <location>
        <begin position="1"/>
        <end position="203"/>
    </location>
</feature>
<feature type="active site" description="Nucleophile" evidence="1">
    <location>
        <position position="101"/>
    </location>
</feature>
<feature type="active site" evidence="1">
    <location>
        <position position="126"/>
    </location>
</feature>
<evidence type="ECO:0000255" key="1">
    <source>
        <dbReference type="HAMAP-Rule" id="MF_00444"/>
    </source>
</evidence>